<gene>
    <name evidence="1" type="primary">rnp4</name>
    <name type="ordered locus">Mpal_0533</name>
</gene>
<accession>B8GET9</accession>
<proteinExistence type="inferred from homology"/>
<comment type="function">
    <text evidence="1">Part of ribonuclease P, a protein complex that generates mature tRNA molecules by cleaving their 5'-ends.</text>
</comment>
<comment type="catalytic activity">
    <reaction evidence="1">
        <text>Endonucleolytic cleavage of RNA, removing 5'-extranucleotides from tRNA precursor.</text>
        <dbReference type="EC" id="3.1.26.5"/>
    </reaction>
</comment>
<comment type="cofactor">
    <cofactor evidence="1">
        <name>Zn(2+)</name>
        <dbReference type="ChEBI" id="CHEBI:29105"/>
    </cofactor>
    <text evidence="1">Binds 1 zinc ion per subunit.</text>
</comment>
<comment type="subunit">
    <text evidence="1">Consists of a catalytic RNA component and at least 4-5 protein subunits.</text>
</comment>
<comment type="subcellular location">
    <subcellularLocation>
        <location evidence="1">Cytoplasm</location>
    </subcellularLocation>
</comment>
<comment type="similarity">
    <text evidence="1">Belongs to the eukaryotic/archaeal RNase P protein component 4 family.</text>
</comment>
<keyword id="KW-0963">Cytoplasm</keyword>
<keyword id="KW-0255">Endonuclease</keyword>
<keyword id="KW-0378">Hydrolase</keyword>
<keyword id="KW-0479">Metal-binding</keyword>
<keyword id="KW-0540">Nuclease</keyword>
<keyword id="KW-1185">Reference proteome</keyword>
<keyword id="KW-0819">tRNA processing</keyword>
<keyword id="KW-0862">Zinc</keyword>
<organism>
    <name type="scientific">Methanosphaerula palustris (strain ATCC BAA-1556 / DSM 19958 / E1-9c)</name>
    <dbReference type="NCBI Taxonomy" id="521011"/>
    <lineage>
        <taxon>Archaea</taxon>
        <taxon>Methanobacteriati</taxon>
        <taxon>Methanobacteriota</taxon>
        <taxon>Stenosarchaea group</taxon>
        <taxon>Methanomicrobia</taxon>
        <taxon>Methanomicrobiales</taxon>
        <taxon>Methanoregulaceae</taxon>
        <taxon>Methanosphaerula</taxon>
    </lineage>
</organism>
<feature type="chain" id="PRO_1000148373" description="Ribonuclease P protein component 4">
    <location>
        <begin position="1"/>
        <end position="106"/>
    </location>
</feature>
<feature type="binding site" evidence="1">
    <location>
        <position position="63"/>
    </location>
    <ligand>
        <name>Zn(2+)</name>
        <dbReference type="ChEBI" id="CHEBI:29105"/>
    </ligand>
</feature>
<feature type="binding site" evidence="1">
    <location>
        <position position="66"/>
    </location>
    <ligand>
        <name>Zn(2+)</name>
        <dbReference type="ChEBI" id="CHEBI:29105"/>
    </ligand>
</feature>
<feature type="binding site" evidence="1">
    <location>
        <position position="89"/>
    </location>
    <ligand>
        <name>Zn(2+)</name>
        <dbReference type="ChEBI" id="CHEBI:29105"/>
    </ligand>
</feature>
<feature type="binding site" evidence="1">
    <location>
        <position position="92"/>
    </location>
    <ligand>
        <name>Zn(2+)</name>
        <dbReference type="ChEBI" id="CHEBI:29105"/>
    </ligand>
</feature>
<protein>
    <recommendedName>
        <fullName evidence="1">Ribonuclease P protein component 4</fullName>
        <shortName evidence="1">RNase P component 4</shortName>
        <ecNumber evidence="1">3.1.26.5</ecNumber>
    </recommendedName>
    <alternativeName>
        <fullName evidence="1">Rpp21</fullName>
    </alternativeName>
</protein>
<evidence type="ECO:0000255" key="1">
    <source>
        <dbReference type="HAMAP-Rule" id="MF_00757"/>
    </source>
</evidence>
<sequence length="106" mass="12603">MTVKSQNRQTKKLAGERIAILFTQAKVFAGINPAWSDRCVERARAIAMRQRMRMEREQRRQYCHHCYAYFLHGVNVRVRVHRGHVIVTCLNCGRQTRYQVVRTDNR</sequence>
<reference key="1">
    <citation type="journal article" date="2015" name="Genome Announc.">
        <title>Complete Genome Sequence of Methanosphaerula palustris E1-9CT, a Hydrogenotrophic Methanogen Isolated from a Minerotrophic Fen Peatland.</title>
        <authorList>
            <person name="Cadillo-Quiroz H."/>
            <person name="Browne P."/>
            <person name="Kyrpides N."/>
            <person name="Woyke T."/>
            <person name="Goodwin L."/>
            <person name="Detter C."/>
            <person name="Yavitt J.B."/>
            <person name="Zinder S.H."/>
        </authorList>
    </citation>
    <scope>NUCLEOTIDE SEQUENCE [LARGE SCALE GENOMIC DNA]</scope>
    <source>
        <strain>ATCC BAA-1556 / DSM 19958 / E1-9c</strain>
    </source>
</reference>
<dbReference type="EC" id="3.1.26.5" evidence="1"/>
<dbReference type="EMBL" id="CP001338">
    <property type="protein sequence ID" value="ACL15906.1"/>
    <property type="molecule type" value="Genomic_DNA"/>
</dbReference>
<dbReference type="RefSeq" id="WP_012617225.1">
    <property type="nucleotide sequence ID" value="NC_011832.1"/>
</dbReference>
<dbReference type="SMR" id="B8GET9"/>
<dbReference type="STRING" id="521011.Mpal_0533"/>
<dbReference type="GeneID" id="7271949"/>
<dbReference type="KEGG" id="mpl:Mpal_0533"/>
<dbReference type="eggNOG" id="arCOG04345">
    <property type="taxonomic scope" value="Archaea"/>
</dbReference>
<dbReference type="HOGENOM" id="CLU_079140_3_1_2"/>
<dbReference type="OrthoDB" id="10058at2157"/>
<dbReference type="Proteomes" id="UP000002457">
    <property type="component" value="Chromosome"/>
</dbReference>
<dbReference type="GO" id="GO:0005737">
    <property type="term" value="C:cytoplasm"/>
    <property type="evidence" value="ECO:0007669"/>
    <property type="project" value="UniProtKB-SubCell"/>
</dbReference>
<dbReference type="GO" id="GO:0030677">
    <property type="term" value="C:ribonuclease P complex"/>
    <property type="evidence" value="ECO:0007669"/>
    <property type="project" value="UniProtKB-UniRule"/>
</dbReference>
<dbReference type="GO" id="GO:0004526">
    <property type="term" value="F:ribonuclease P activity"/>
    <property type="evidence" value="ECO:0007669"/>
    <property type="project" value="UniProtKB-UniRule"/>
</dbReference>
<dbReference type="GO" id="GO:0008270">
    <property type="term" value="F:zinc ion binding"/>
    <property type="evidence" value="ECO:0007669"/>
    <property type="project" value="UniProtKB-UniRule"/>
</dbReference>
<dbReference type="GO" id="GO:0001682">
    <property type="term" value="P:tRNA 5'-leader removal"/>
    <property type="evidence" value="ECO:0007669"/>
    <property type="project" value="UniProtKB-UniRule"/>
</dbReference>
<dbReference type="Gene3D" id="6.20.50.20">
    <property type="match status" value="1"/>
</dbReference>
<dbReference type="Gene3D" id="1.20.5.420">
    <property type="entry name" value="Immunoglobulin FC, subunit C"/>
    <property type="match status" value="1"/>
</dbReference>
<dbReference type="HAMAP" id="MF_00757">
    <property type="entry name" value="RNase_P_4"/>
    <property type="match status" value="1"/>
</dbReference>
<dbReference type="InterPro" id="IPR016432">
    <property type="entry name" value="RNP4"/>
</dbReference>
<dbReference type="InterPro" id="IPR007175">
    <property type="entry name" value="Rpr2/Snm1/Rpp21"/>
</dbReference>
<dbReference type="PANTHER" id="PTHR14742:SF0">
    <property type="entry name" value="RIBONUCLEASE P PROTEIN SUBUNIT P21"/>
    <property type="match status" value="1"/>
</dbReference>
<dbReference type="PANTHER" id="PTHR14742">
    <property type="entry name" value="RIBONUCLEASE P SUBUNIT P21"/>
    <property type="match status" value="1"/>
</dbReference>
<dbReference type="Pfam" id="PF04032">
    <property type="entry name" value="Rpr2"/>
    <property type="match status" value="1"/>
</dbReference>
<dbReference type="PIRSF" id="PIRSF004878">
    <property type="entry name" value="RNase_P_4"/>
    <property type="match status" value="1"/>
</dbReference>
<name>RNP4_METPE</name>